<reference key="1">
    <citation type="journal article" date="2009" name="PLoS Biol.">
        <title>Lineage-specific biology revealed by a finished genome assembly of the mouse.</title>
        <authorList>
            <person name="Church D.M."/>
            <person name="Goodstadt L."/>
            <person name="Hillier L.W."/>
            <person name="Zody M.C."/>
            <person name="Goldstein S."/>
            <person name="She X."/>
            <person name="Bult C.J."/>
            <person name="Agarwala R."/>
            <person name="Cherry J.L."/>
            <person name="DiCuccio M."/>
            <person name="Hlavina W."/>
            <person name="Kapustin Y."/>
            <person name="Meric P."/>
            <person name="Maglott D."/>
            <person name="Birtle Z."/>
            <person name="Marques A.C."/>
            <person name="Graves T."/>
            <person name="Zhou S."/>
            <person name="Teague B."/>
            <person name="Potamousis K."/>
            <person name="Churas C."/>
            <person name="Place M."/>
            <person name="Herschleb J."/>
            <person name="Runnheim R."/>
            <person name="Forrest D."/>
            <person name="Amos-Landgraf J."/>
            <person name="Schwartz D.C."/>
            <person name="Cheng Z."/>
            <person name="Lindblad-Toh K."/>
            <person name="Eichler E.E."/>
            <person name="Ponting C.P."/>
        </authorList>
    </citation>
    <scope>NUCLEOTIDE SEQUENCE [LARGE SCALE GENOMIC DNA]</scope>
    <source>
        <strain>C57BL/6J</strain>
    </source>
</reference>
<reference key="2">
    <citation type="journal article" date="2004" name="Genome Res.">
        <title>The status, quality, and expansion of the NIH full-length cDNA project: the Mammalian Gene Collection (MGC).</title>
        <authorList>
            <consortium name="The MGC Project Team"/>
        </authorList>
    </citation>
    <scope>NUCLEOTIDE SEQUENCE [LARGE SCALE MRNA] (ISOFORM 1)</scope>
    <source>
        <tissue>Brain</tissue>
    </source>
</reference>
<reference key="3">
    <citation type="journal article" date="2003" name="DNA Res.">
        <title>Prediction of the coding sequences of mouse homologues of KIAA gene: III. The complete nucleotide sequences of 500 mouse KIAA-homologous cDNAs identified by screening of terminal sequences of cDNA clones randomly sampled from size-fractionated libraries.</title>
        <authorList>
            <person name="Okazaki N."/>
            <person name="Kikuno R."/>
            <person name="Ohara R."/>
            <person name="Inamoto S."/>
            <person name="Koseki H."/>
            <person name="Hiraoka S."/>
            <person name="Saga Y."/>
            <person name="Nagase T."/>
            <person name="Ohara O."/>
            <person name="Koga H."/>
        </authorList>
    </citation>
    <scope>NUCLEOTIDE SEQUENCE [LARGE SCALE MRNA] OF 117-817 (ISOFORM 2)</scope>
    <source>
        <tissue>Brain</tissue>
    </source>
</reference>
<reference key="4">
    <citation type="journal article" date="2010" name="Cell">
        <title>A tissue-specific atlas of mouse protein phosphorylation and expression.</title>
        <authorList>
            <person name="Huttlin E.L."/>
            <person name="Jedrychowski M.P."/>
            <person name="Elias J.E."/>
            <person name="Goswami T."/>
            <person name="Rad R."/>
            <person name="Beausoleil S.A."/>
            <person name="Villen J."/>
            <person name="Haas W."/>
            <person name="Sowa M.E."/>
            <person name="Gygi S.P."/>
        </authorList>
    </citation>
    <scope>PHOSPHORYLATION [LARGE SCALE ANALYSIS] AT SER-212; SER-214 AND SER-216</scope>
    <scope>IDENTIFICATION BY MASS SPECTROMETRY [LARGE SCALE ANALYSIS]</scope>
    <source>
        <tissue>Brain</tissue>
    </source>
</reference>
<reference key="5">
    <citation type="journal article" date="2015" name="J. Cell Sci.">
        <title>EFR3s are palmitoylated plasma membrane proteins that control responsiveness to G-protein-coupled receptors.</title>
        <authorList>
            <person name="Bojjireddy N."/>
            <person name="Guzman-Hernandez M.L."/>
            <person name="Reinhard N.R."/>
            <person name="Jovic M."/>
            <person name="Balla T."/>
        </authorList>
    </citation>
    <scope>TISSUE SPECIFICITY</scope>
</reference>
<organism>
    <name type="scientific">Mus musculus</name>
    <name type="common">Mouse</name>
    <dbReference type="NCBI Taxonomy" id="10090"/>
    <lineage>
        <taxon>Eukaryota</taxon>
        <taxon>Metazoa</taxon>
        <taxon>Chordata</taxon>
        <taxon>Craniata</taxon>
        <taxon>Vertebrata</taxon>
        <taxon>Euteleostomi</taxon>
        <taxon>Mammalia</taxon>
        <taxon>Eutheria</taxon>
        <taxon>Euarchontoglires</taxon>
        <taxon>Glires</taxon>
        <taxon>Rodentia</taxon>
        <taxon>Myomorpha</taxon>
        <taxon>Muroidea</taxon>
        <taxon>Muridae</taxon>
        <taxon>Murinae</taxon>
        <taxon>Mus</taxon>
        <taxon>Mus</taxon>
    </lineage>
</organism>
<sequence length="817" mass="92406">MYGVCGCCGALRPRYKRLVDNIFPEDPEDGLVKTNMEKLTFYALSAPEKLDRIGAYLSERLIRDVGRHRYGYVCIAMEALDQLLMACHCQSINLFVESFLKMVAKLLESEKPNLQILGTNSFVKFANIEEDTPSYHRSYDFFVSRFSEMCHSSHDDLEIKTKIRMSGIKGLQGVVRKTVNDELQANIWDPQHMDKIVPSLLFNLQHVEEAESRSPSPLQAPEKEKENPAELAERCLRELLGRAAFGNIKNAIKPVLIHLDNHSLWEPKVFATRCFKIIMYSIQPQHSHLVIQQLLSHLDANSRSAATVRAGIVEVLSEAAIIAATGSVGPTVLEMFNTLLRQLRLSIDYALTGSYDGAVSLGSKIIKEHEECMFQEAVIKTIGSFASTLPTYQRSEVILFIMSKVPLPSVHHPVETGRTGENRNRLTQIMLLKSLLQVSTGFQCNNMMSALPSNFLDRLLSTALMEDAEIRLFVLEILISFIDRHGNRHKFSTISTLGDISVLKLKVDKCSRQDTVFMKKHSQQLYRHIYLSCKEETNIQKHYEALYGLLALISIELANEEVVVDLIRLVLAVQDVAQVNEENLPTYNRCALYALGAAYLNLISQLTTVPAFCQHIHEVIETRKKEAPYMLPEDVFVEKPRLSQNLDGVVIEFLFRQSKISEVLGGSGYNSDRLCLPYIPQLTDEDRLSKRKSIGETISLQVEVESRNSPEKEERVPAEEITYETLKKAIVDSVAVEEQERERQRQVVEKFQKAPFEEIAAHCGARASLLQSKLNQIFEITIRPPPSPSGTISAAYGQPQNHSIPVYEMKFPDLCVY</sequence>
<dbReference type="EMBL" id="AC111092">
    <property type="status" value="NOT_ANNOTATED_CDS"/>
    <property type="molecule type" value="Genomic_DNA"/>
</dbReference>
<dbReference type="EMBL" id="BC147643">
    <property type="protein sequence ID" value="AAI47644.1"/>
    <property type="molecule type" value="mRNA"/>
</dbReference>
<dbReference type="EMBL" id="BC157968">
    <property type="protein sequence ID" value="AAI57969.1"/>
    <property type="molecule type" value="mRNA"/>
</dbReference>
<dbReference type="EMBL" id="AK129247">
    <property type="protein sequence ID" value="BAC98057.1"/>
    <property type="molecule type" value="mRNA"/>
</dbReference>
<dbReference type="CCDS" id="CCDS49016.1">
    <molecule id="Q6ZQ18-1"/>
</dbReference>
<dbReference type="RefSeq" id="NP_001075952.1">
    <molecule id="Q6ZQ18-1"/>
    <property type="nucleotide sequence ID" value="NM_001082483.2"/>
</dbReference>
<dbReference type="BioGRID" id="580010">
    <property type="interactions" value="3"/>
</dbReference>
<dbReference type="FunCoup" id="Q6ZQ18">
    <property type="interactions" value="1637"/>
</dbReference>
<dbReference type="IntAct" id="Q6ZQ18">
    <property type="interactions" value="1"/>
</dbReference>
<dbReference type="MINT" id="Q6ZQ18"/>
<dbReference type="STRING" id="10090.ENSMUSP00000106809"/>
<dbReference type="GlyGen" id="Q6ZQ18">
    <property type="glycosylation" value="2 sites, 1 N-linked glycan (1 site)"/>
</dbReference>
<dbReference type="iPTMnet" id="Q6ZQ18"/>
<dbReference type="PhosphoSitePlus" id="Q6ZQ18"/>
<dbReference type="SwissPalm" id="Q6ZQ18"/>
<dbReference type="jPOST" id="Q6ZQ18"/>
<dbReference type="PaxDb" id="10090-ENSMUSP00000106809"/>
<dbReference type="PeptideAtlas" id="Q6ZQ18"/>
<dbReference type="ProteomicsDB" id="275444">
    <molecule id="Q6ZQ18-1"/>
</dbReference>
<dbReference type="ProteomicsDB" id="275445">
    <molecule id="Q6ZQ18-2"/>
</dbReference>
<dbReference type="Antibodypedia" id="51573">
    <property type="antibodies" value="62 antibodies from 13 providers"/>
</dbReference>
<dbReference type="Ensembl" id="ENSMUST00000111178.2">
    <molecule id="Q6ZQ18-1"/>
    <property type="protein sequence ID" value="ENSMUSP00000106809.2"/>
    <property type="gene ID" value="ENSMUSG00000020658.11"/>
</dbReference>
<dbReference type="GeneID" id="668212"/>
<dbReference type="KEGG" id="mmu:668212"/>
<dbReference type="UCSC" id="uc007mxh.1">
    <molecule id="Q6ZQ18-1"/>
    <property type="organism name" value="mouse"/>
</dbReference>
<dbReference type="UCSC" id="uc011yjt.1">
    <molecule id="Q6ZQ18-2"/>
    <property type="organism name" value="mouse"/>
</dbReference>
<dbReference type="AGR" id="MGI:2444851"/>
<dbReference type="CTD" id="22979"/>
<dbReference type="MGI" id="MGI:2444851">
    <property type="gene designation" value="Efr3b"/>
</dbReference>
<dbReference type="VEuPathDB" id="HostDB:ENSMUSG00000020658"/>
<dbReference type="eggNOG" id="KOG1877">
    <property type="taxonomic scope" value="Eukaryota"/>
</dbReference>
<dbReference type="GeneTree" id="ENSGT00390000002143"/>
<dbReference type="HOGENOM" id="CLU_012674_1_0_1"/>
<dbReference type="InParanoid" id="Q6ZQ18"/>
<dbReference type="OMA" id="VGTKYQT"/>
<dbReference type="OrthoDB" id="19232at2759"/>
<dbReference type="PhylomeDB" id="Q6ZQ18"/>
<dbReference type="TreeFam" id="TF314098"/>
<dbReference type="BioGRID-ORCS" id="668212">
    <property type="hits" value="3 hits in 77 CRISPR screens"/>
</dbReference>
<dbReference type="CD-CODE" id="CE726F99">
    <property type="entry name" value="Postsynaptic density"/>
</dbReference>
<dbReference type="PRO" id="PR:Q6ZQ18"/>
<dbReference type="Proteomes" id="UP000000589">
    <property type="component" value="Chromosome 12"/>
</dbReference>
<dbReference type="RNAct" id="Q6ZQ18">
    <property type="molecule type" value="protein"/>
</dbReference>
<dbReference type="Bgee" id="ENSMUSG00000020658">
    <property type="expression patterns" value="Expressed in central gray substance of midbrain and 180 other cell types or tissues"/>
</dbReference>
<dbReference type="ExpressionAtlas" id="Q6ZQ18">
    <property type="expression patterns" value="baseline and differential"/>
</dbReference>
<dbReference type="GO" id="GO:0015629">
    <property type="term" value="C:actin cytoskeleton"/>
    <property type="evidence" value="ECO:0007669"/>
    <property type="project" value="Ensembl"/>
</dbReference>
<dbReference type="GO" id="GO:0005829">
    <property type="term" value="C:cytosol"/>
    <property type="evidence" value="ECO:0007669"/>
    <property type="project" value="UniProtKB-SubCell"/>
</dbReference>
<dbReference type="GO" id="GO:0005886">
    <property type="term" value="C:plasma membrane"/>
    <property type="evidence" value="ECO:0000314"/>
    <property type="project" value="MGI"/>
</dbReference>
<dbReference type="GO" id="GO:0046854">
    <property type="term" value="P:phosphatidylinositol phosphate biosynthetic process"/>
    <property type="evidence" value="ECO:0000250"/>
    <property type="project" value="UniProtKB"/>
</dbReference>
<dbReference type="GO" id="GO:0072659">
    <property type="term" value="P:protein localization to plasma membrane"/>
    <property type="evidence" value="ECO:0000250"/>
    <property type="project" value="UniProtKB"/>
</dbReference>
<dbReference type="GO" id="GO:0035176">
    <property type="term" value="P:social behavior"/>
    <property type="evidence" value="ECO:0000314"/>
    <property type="project" value="MGI"/>
</dbReference>
<dbReference type="GO" id="GO:0019226">
    <property type="term" value="P:transmission of nerve impulse"/>
    <property type="evidence" value="ECO:0000315"/>
    <property type="project" value="MGI"/>
</dbReference>
<dbReference type="FunFam" id="1.25.10.10:FF:000139">
    <property type="entry name" value="protein EFR3 homolog B"/>
    <property type="match status" value="1"/>
</dbReference>
<dbReference type="Gene3D" id="1.25.10.10">
    <property type="entry name" value="Leucine-rich Repeat Variant"/>
    <property type="match status" value="1"/>
</dbReference>
<dbReference type="InterPro" id="IPR011989">
    <property type="entry name" value="ARM-like"/>
</dbReference>
<dbReference type="InterPro" id="IPR016024">
    <property type="entry name" value="ARM-type_fold"/>
</dbReference>
<dbReference type="InterPro" id="IPR049152">
    <property type="entry name" value="EFR3-like_ARM"/>
</dbReference>
<dbReference type="InterPro" id="IPR051851">
    <property type="entry name" value="EFR3_Homologs"/>
</dbReference>
<dbReference type="PANTHER" id="PTHR12444:SF4">
    <property type="entry name" value="PROTEIN EFR3 HOMOLOG B"/>
    <property type="match status" value="1"/>
</dbReference>
<dbReference type="PANTHER" id="PTHR12444">
    <property type="entry name" value="PROTEIN EFR3 HOMOLOG CMP44E"/>
    <property type="match status" value="1"/>
</dbReference>
<dbReference type="Pfam" id="PF21052">
    <property type="entry name" value="EFR3_ARM"/>
    <property type="match status" value="1"/>
</dbReference>
<dbReference type="SUPFAM" id="SSF48371">
    <property type="entry name" value="ARM repeat"/>
    <property type="match status" value="1"/>
</dbReference>
<comment type="function">
    <text evidence="1">Component of a complex required to localize phosphatidylinositol 4-kinase (PI4K) to the plasma membrane. The complex acts as a regulator of phosphatidylinositol 4-phosphate (PtdIns(4)P) synthesis. In the complex, EFR3B probably acts as the membrane-anchoring component. Also involved in responsiveness to G-protein-coupled receptors; it is however unclear whether this role is direct or indirect.</text>
</comment>
<comment type="subunit">
    <text evidence="1">Component of a phosphatidylinositol 4-kinase (PI4K) complex, composed of PI4KA, EFR3 (EFR3A or EFR3B), TTC7 (TTC7A or TTC7B) and HYCC (HYCC1 or HYCC2).</text>
</comment>
<comment type="subcellular location">
    <subcellularLocation>
        <location evidence="1">Cell membrane</location>
        <topology evidence="1">Lipid-anchor</topology>
    </subcellularLocation>
    <subcellularLocation>
        <location evidence="1">Cytoplasm</location>
        <location evidence="1">Cytosol</location>
    </subcellularLocation>
    <text evidence="1">Palmitoylation anchors the protein to the plasma membrane. A small amount is observed in the cytosol.</text>
</comment>
<comment type="alternative products">
    <event type="alternative splicing"/>
    <isoform>
        <id>Q6ZQ18-1</id>
        <name>1</name>
        <sequence type="displayed"/>
    </isoform>
    <isoform>
        <id>Q6ZQ18-2</id>
        <name>2</name>
        <sequence type="described" ref="VSP_029808"/>
    </isoform>
</comment>
<comment type="tissue specificity">
    <text evidence="2">Widely expressed.</text>
</comment>
<comment type="PTM">
    <text evidence="1">Palmitoylated at its N-terminus, anchoring the protein to the plasma membrane.</text>
</comment>
<comment type="similarity">
    <text evidence="4">Belongs to the EFR3 family.</text>
</comment>
<accession>Q6ZQ18</accession>
<accession>B2RXT1</accession>
<protein>
    <recommendedName>
        <fullName>Protein EFR3 homolog B</fullName>
    </recommendedName>
</protein>
<name>EFR3B_MOUSE</name>
<gene>
    <name type="primary">Efr3b</name>
    <name type="synonym">Kiaa0953</name>
</gene>
<evidence type="ECO:0000250" key="1">
    <source>
        <dbReference type="UniProtKB" id="Q9Y2G0"/>
    </source>
</evidence>
<evidence type="ECO:0000269" key="2">
    <source>
    </source>
</evidence>
<evidence type="ECO:0000303" key="3">
    <source>
    </source>
</evidence>
<evidence type="ECO:0000305" key="4"/>
<evidence type="ECO:0007744" key="5">
    <source>
    </source>
</evidence>
<feature type="chain" id="PRO_0000312296" description="Protein EFR3 homolog B">
    <location>
        <begin position="1"/>
        <end position="817"/>
    </location>
</feature>
<feature type="modified residue" description="Phosphoserine" evidence="5">
    <location>
        <position position="212"/>
    </location>
</feature>
<feature type="modified residue" description="Phosphoserine" evidence="5">
    <location>
        <position position="214"/>
    </location>
</feature>
<feature type="modified residue" description="Phosphoserine" evidence="5">
    <location>
        <position position="216"/>
    </location>
</feature>
<feature type="splice variant" id="VSP_029808" description="In isoform 2." evidence="3">
    <location>
        <begin position="575"/>
        <end position="618"/>
    </location>
</feature>
<keyword id="KW-0025">Alternative splicing</keyword>
<keyword id="KW-1003">Cell membrane</keyword>
<keyword id="KW-0963">Cytoplasm</keyword>
<keyword id="KW-0449">Lipoprotein</keyword>
<keyword id="KW-0472">Membrane</keyword>
<keyword id="KW-0564">Palmitate</keyword>
<keyword id="KW-0597">Phosphoprotein</keyword>
<keyword id="KW-1185">Reference proteome</keyword>
<proteinExistence type="evidence at protein level"/>